<name>SUCC_SALRD</name>
<keyword id="KW-0067">ATP-binding</keyword>
<keyword id="KW-0436">Ligase</keyword>
<keyword id="KW-0460">Magnesium</keyword>
<keyword id="KW-0479">Metal-binding</keyword>
<keyword id="KW-0547">Nucleotide-binding</keyword>
<keyword id="KW-1185">Reference proteome</keyword>
<keyword id="KW-0816">Tricarboxylic acid cycle</keyword>
<evidence type="ECO:0000255" key="1">
    <source>
        <dbReference type="HAMAP-Rule" id="MF_00558"/>
    </source>
</evidence>
<dbReference type="EC" id="6.2.1.5" evidence="1"/>
<dbReference type="EMBL" id="CP000159">
    <property type="protein sequence ID" value="ABC44068.1"/>
    <property type="molecule type" value="Genomic_DNA"/>
</dbReference>
<dbReference type="RefSeq" id="WP_011403880.1">
    <property type="nucleotide sequence ID" value="NC_007677.1"/>
</dbReference>
<dbReference type="RefSeq" id="YP_445252.1">
    <property type="nucleotide sequence ID" value="NC_007677.1"/>
</dbReference>
<dbReference type="SMR" id="Q2S3H9"/>
<dbReference type="STRING" id="309807.SRU_1125"/>
<dbReference type="EnsemblBacteria" id="ABC44068">
    <property type="protein sequence ID" value="ABC44068"/>
    <property type="gene ID" value="SRU_1125"/>
</dbReference>
<dbReference type="GeneID" id="83728031"/>
<dbReference type="KEGG" id="sru:SRU_1125"/>
<dbReference type="PATRIC" id="fig|309807.25.peg.1164"/>
<dbReference type="eggNOG" id="COG0045">
    <property type="taxonomic scope" value="Bacteria"/>
</dbReference>
<dbReference type="HOGENOM" id="CLU_037430_0_2_10"/>
<dbReference type="OrthoDB" id="9802602at2"/>
<dbReference type="UniPathway" id="UPA00223">
    <property type="reaction ID" value="UER00999"/>
</dbReference>
<dbReference type="Proteomes" id="UP000008674">
    <property type="component" value="Chromosome"/>
</dbReference>
<dbReference type="GO" id="GO:0005829">
    <property type="term" value="C:cytosol"/>
    <property type="evidence" value="ECO:0007669"/>
    <property type="project" value="TreeGrafter"/>
</dbReference>
<dbReference type="GO" id="GO:0042709">
    <property type="term" value="C:succinate-CoA ligase complex"/>
    <property type="evidence" value="ECO:0007669"/>
    <property type="project" value="TreeGrafter"/>
</dbReference>
<dbReference type="GO" id="GO:0005524">
    <property type="term" value="F:ATP binding"/>
    <property type="evidence" value="ECO:0007669"/>
    <property type="project" value="UniProtKB-UniRule"/>
</dbReference>
<dbReference type="GO" id="GO:0000287">
    <property type="term" value="F:magnesium ion binding"/>
    <property type="evidence" value="ECO:0007669"/>
    <property type="project" value="UniProtKB-UniRule"/>
</dbReference>
<dbReference type="GO" id="GO:0004775">
    <property type="term" value="F:succinate-CoA ligase (ADP-forming) activity"/>
    <property type="evidence" value="ECO:0007669"/>
    <property type="project" value="UniProtKB-UniRule"/>
</dbReference>
<dbReference type="GO" id="GO:0004776">
    <property type="term" value="F:succinate-CoA ligase (GDP-forming) activity"/>
    <property type="evidence" value="ECO:0007669"/>
    <property type="project" value="RHEA"/>
</dbReference>
<dbReference type="GO" id="GO:0006104">
    <property type="term" value="P:succinyl-CoA metabolic process"/>
    <property type="evidence" value="ECO:0007669"/>
    <property type="project" value="TreeGrafter"/>
</dbReference>
<dbReference type="GO" id="GO:0006099">
    <property type="term" value="P:tricarboxylic acid cycle"/>
    <property type="evidence" value="ECO:0007669"/>
    <property type="project" value="UniProtKB-UniRule"/>
</dbReference>
<dbReference type="FunFam" id="3.30.1490.20:FF:000002">
    <property type="entry name" value="Succinate--CoA ligase [ADP-forming] subunit beta"/>
    <property type="match status" value="1"/>
</dbReference>
<dbReference type="FunFam" id="3.30.470.20:FF:000002">
    <property type="entry name" value="Succinate--CoA ligase [ADP-forming] subunit beta"/>
    <property type="match status" value="1"/>
</dbReference>
<dbReference type="FunFam" id="3.40.50.261:FF:000001">
    <property type="entry name" value="Succinate--CoA ligase [ADP-forming] subunit beta"/>
    <property type="match status" value="1"/>
</dbReference>
<dbReference type="Gene3D" id="3.30.1490.20">
    <property type="entry name" value="ATP-grasp fold, A domain"/>
    <property type="match status" value="1"/>
</dbReference>
<dbReference type="Gene3D" id="3.30.470.20">
    <property type="entry name" value="ATP-grasp fold, B domain"/>
    <property type="match status" value="1"/>
</dbReference>
<dbReference type="Gene3D" id="3.40.50.261">
    <property type="entry name" value="Succinyl-CoA synthetase domains"/>
    <property type="match status" value="1"/>
</dbReference>
<dbReference type="HAMAP" id="MF_00558">
    <property type="entry name" value="Succ_CoA_beta"/>
    <property type="match status" value="1"/>
</dbReference>
<dbReference type="InterPro" id="IPR011761">
    <property type="entry name" value="ATP-grasp"/>
</dbReference>
<dbReference type="InterPro" id="IPR013650">
    <property type="entry name" value="ATP-grasp_succ-CoA_synth-type"/>
</dbReference>
<dbReference type="InterPro" id="IPR013815">
    <property type="entry name" value="ATP_grasp_subdomain_1"/>
</dbReference>
<dbReference type="InterPro" id="IPR017866">
    <property type="entry name" value="Succ-CoA_synthase_bsu_CS"/>
</dbReference>
<dbReference type="InterPro" id="IPR005811">
    <property type="entry name" value="SUCC_ACL_C"/>
</dbReference>
<dbReference type="InterPro" id="IPR005809">
    <property type="entry name" value="Succ_CoA_ligase-like_bsu"/>
</dbReference>
<dbReference type="InterPro" id="IPR016102">
    <property type="entry name" value="Succinyl-CoA_synth-like"/>
</dbReference>
<dbReference type="NCBIfam" id="NF001913">
    <property type="entry name" value="PRK00696.1"/>
    <property type="match status" value="1"/>
</dbReference>
<dbReference type="NCBIfam" id="TIGR01016">
    <property type="entry name" value="sucCoAbeta"/>
    <property type="match status" value="1"/>
</dbReference>
<dbReference type="PANTHER" id="PTHR11815:SF10">
    <property type="entry name" value="SUCCINATE--COA LIGASE [GDP-FORMING] SUBUNIT BETA, MITOCHONDRIAL"/>
    <property type="match status" value="1"/>
</dbReference>
<dbReference type="PANTHER" id="PTHR11815">
    <property type="entry name" value="SUCCINYL-COA SYNTHETASE BETA CHAIN"/>
    <property type="match status" value="1"/>
</dbReference>
<dbReference type="Pfam" id="PF08442">
    <property type="entry name" value="ATP-grasp_2"/>
    <property type="match status" value="1"/>
</dbReference>
<dbReference type="Pfam" id="PF00549">
    <property type="entry name" value="Ligase_CoA"/>
    <property type="match status" value="1"/>
</dbReference>
<dbReference type="PIRSF" id="PIRSF001554">
    <property type="entry name" value="SucCS_beta"/>
    <property type="match status" value="1"/>
</dbReference>
<dbReference type="SUPFAM" id="SSF56059">
    <property type="entry name" value="Glutathione synthetase ATP-binding domain-like"/>
    <property type="match status" value="1"/>
</dbReference>
<dbReference type="SUPFAM" id="SSF52210">
    <property type="entry name" value="Succinyl-CoA synthetase domains"/>
    <property type="match status" value="1"/>
</dbReference>
<dbReference type="PROSITE" id="PS50975">
    <property type="entry name" value="ATP_GRASP"/>
    <property type="match status" value="1"/>
</dbReference>
<dbReference type="PROSITE" id="PS01217">
    <property type="entry name" value="SUCCINYL_COA_LIG_3"/>
    <property type="match status" value="1"/>
</dbReference>
<gene>
    <name evidence="1" type="primary">sucC</name>
    <name type="ordered locus">SRU_1125</name>
</gene>
<reference key="1">
    <citation type="journal article" date="2005" name="Proc. Natl. Acad. Sci. U.S.A.">
        <title>The genome of Salinibacter ruber: convergence and gene exchange among hyperhalophilic bacteria and archaea.</title>
        <authorList>
            <person name="Mongodin E.F."/>
            <person name="Nelson K.E."/>
            <person name="Daugherty S."/>
            <person name="DeBoy R.T."/>
            <person name="Wister J."/>
            <person name="Khouri H."/>
            <person name="Weidman J."/>
            <person name="Walsh D.A."/>
            <person name="Papke R.T."/>
            <person name="Sanchez Perez G."/>
            <person name="Sharma A.K."/>
            <person name="Nesbo C.L."/>
            <person name="MacLeod D."/>
            <person name="Bapteste E."/>
            <person name="Doolittle W.F."/>
            <person name="Charlebois R.L."/>
            <person name="Legault B."/>
            <person name="Rodriguez-Valera F."/>
        </authorList>
    </citation>
    <scope>NUCLEOTIDE SEQUENCE [LARGE SCALE GENOMIC DNA]</scope>
    <source>
        <strain>DSM 13855 / CECT 5946 / M31</strain>
    </source>
</reference>
<sequence>MKLHEYQAKGLFRDYGVSVPDGIVAETVDAAVDAARRLEEENDATLFIVKAQIHAGGRGKGGGVKLAHSVEEVREHADNILGMDLVTHQTGPEGQTVRKILVTEGVDIDQEYYLGVTLDRETSMNAIMVSTEGGVDIETVAEESPEKIQRVWVDPSIGLRPFQTRQLAFAMGLEGDAFKQAVASIQGLYEAFEENDCTLAEINPLVQTPGGDIEAVDAKVNLDDNALFRHPDLEEMRDLHEEDPTEVKAGEHGLSYITLDGNVGCMVNGAGLAMATMDIIKLAGGEPANFLDVGGAASAETVEAGFRIILEDPNVEALLLNIFGGIVRCDRVAQGVIEAAKNIDIDVPLIVRLQGTNAEEGKRLLDESDLSLRSAVLLKEAADEVTAALGED</sequence>
<organism>
    <name type="scientific">Salinibacter ruber (strain DSM 13855 / M31)</name>
    <dbReference type="NCBI Taxonomy" id="309807"/>
    <lineage>
        <taxon>Bacteria</taxon>
        <taxon>Pseudomonadati</taxon>
        <taxon>Rhodothermota</taxon>
        <taxon>Rhodothermia</taxon>
        <taxon>Rhodothermales</taxon>
        <taxon>Salinibacteraceae</taxon>
        <taxon>Salinibacter</taxon>
    </lineage>
</organism>
<protein>
    <recommendedName>
        <fullName evidence="1">Succinate--CoA ligase [ADP-forming] subunit beta</fullName>
        <ecNumber evidence="1">6.2.1.5</ecNumber>
    </recommendedName>
    <alternativeName>
        <fullName evidence="1">Succinyl-CoA synthetase subunit beta</fullName>
        <shortName evidence="1">SCS-beta</shortName>
    </alternativeName>
</protein>
<proteinExistence type="inferred from homology"/>
<comment type="function">
    <text evidence="1">Succinyl-CoA synthetase functions in the citric acid cycle (TCA), coupling the hydrolysis of succinyl-CoA to the synthesis of either ATP or GTP and thus represents the only step of substrate-level phosphorylation in the TCA. The beta subunit provides nucleotide specificity of the enzyme and binds the substrate succinate, while the binding sites for coenzyme A and phosphate are found in the alpha subunit.</text>
</comment>
<comment type="catalytic activity">
    <reaction evidence="1">
        <text>succinate + ATP + CoA = succinyl-CoA + ADP + phosphate</text>
        <dbReference type="Rhea" id="RHEA:17661"/>
        <dbReference type="ChEBI" id="CHEBI:30031"/>
        <dbReference type="ChEBI" id="CHEBI:30616"/>
        <dbReference type="ChEBI" id="CHEBI:43474"/>
        <dbReference type="ChEBI" id="CHEBI:57287"/>
        <dbReference type="ChEBI" id="CHEBI:57292"/>
        <dbReference type="ChEBI" id="CHEBI:456216"/>
        <dbReference type="EC" id="6.2.1.5"/>
    </reaction>
    <physiologicalReaction direction="right-to-left" evidence="1">
        <dbReference type="Rhea" id="RHEA:17663"/>
    </physiologicalReaction>
</comment>
<comment type="catalytic activity">
    <reaction evidence="1">
        <text>GTP + succinate + CoA = succinyl-CoA + GDP + phosphate</text>
        <dbReference type="Rhea" id="RHEA:22120"/>
        <dbReference type="ChEBI" id="CHEBI:30031"/>
        <dbReference type="ChEBI" id="CHEBI:37565"/>
        <dbReference type="ChEBI" id="CHEBI:43474"/>
        <dbReference type="ChEBI" id="CHEBI:57287"/>
        <dbReference type="ChEBI" id="CHEBI:57292"/>
        <dbReference type="ChEBI" id="CHEBI:58189"/>
    </reaction>
    <physiologicalReaction direction="right-to-left" evidence="1">
        <dbReference type="Rhea" id="RHEA:22122"/>
    </physiologicalReaction>
</comment>
<comment type="cofactor">
    <cofactor evidence="1">
        <name>Mg(2+)</name>
        <dbReference type="ChEBI" id="CHEBI:18420"/>
    </cofactor>
    <text evidence="1">Binds 1 Mg(2+) ion per subunit.</text>
</comment>
<comment type="pathway">
    <text evidence="1">Carbohydrate metabolism; tricarboxylic acid cycle; succinate from succinyl-CoA (ligase route): step 1/1.</text>
</comment>
<comment type="subunit">
    <text evidence="1">Heterotetramer of two alpha and two beta subunits.</text>
</comment>
<comment type="similarity">
    <text evidence="1">Belongs to the succinate/malate CoA ligase beta subunit family.</text>
</comment>
<feature type="chain" id="PRO_1000082214" description="Succinate--CoA ligase [ADP-forming] subunit beta">
    <location>
        <begin position="1"/>
        <end position="392"/>
    </location>
</feature>
<feature type="domain" description="ATP-grasp" evidence="1">
    <location>
        <begin position="9"/>
        <end position="248"/>
    </location>
</feature>
<feature type="binding site" evidence="1">
    <location>
        <position position="50"/>
    </location>
    <ligand>
        <name>ATP</name>
        <dbReference type="ChEBI" id="CHEBI:30616"/>
    </ligand>
</feature>
<feature type="binding site" evidence="1">
    <location>
        <begin position="57"/>
        <end position="59"/>
    </location>
    <ligand>
        <name>ATP</name>
        <dbReference type="ChEBI" id="CHEBI:30616"/>
    </ligand>
</feature>
<feature type="binding site" evidence="1">
    <location>
        <position position="106"/>
    </location>
    <ligand>
        <name>ATP</name>
        <dbReference type="ChEBI" id="CHEBI:30616"/>
    </ligand>
</feature>
<feature type="binding site" evidence="1">
    <location>
        <position position="111"/>
    </location>
    <ligand>
        <name>ATP</name>
        <dbReference type="ChEBI" id="CHEBI:30616"/>
    </ligand>
</feature>
<feature type="binding site" evidence="1">
    <location>
        <position position="203"/>
    </location>
    <ligand>
        <name>Mg(2+)</name>
        <dbReference type="ChEBI" id="CHEBI:18420"/>
    </ligand>
</feature>
<feature type="binding site" evidence="1">
    <location>
        <position position="217"/>
    </location>
    <ligand>
        <name>Mg(2+)</name>
        <dbReference type="ChEBI" id="CHEBI:18420"/>
    </ligand>
</feature>
<feature type="binding site" evidence="1">
    <location>
        <position position="268"/>
    </location>
    <ligand>
        <name>substrate</name>
        <note>ligand shared with subunit alpha</note>
    </ligand>
</feature>
<feature type="binding site" evidence="1">
    <location>
        <begin position="325"/>
        <end position="327"/>
    </location>
    <ligand>
        <name>substrate</name>
        <note>ligand shared with subunit alpha</note>
    </ligand>
</feature>
<accession>Q2S3H9</accession>